<sequence>MAKKALIVKAQRKPKFAVRAYTRCNRCGRPHSVYRKFGLCRLCLREMAHRGELPGVTKSSW</sequence>
<proteinExistence type="inferred from homology"/>
<accession>A0LRN3</accession>
<gene>
    <name evidence="1" type="primary">rpsZ</name>
    <name evidence="1" type="synonym">rpsN</name>
    <name type="ordered locus">Acel_0319</name>
</gene>
<keyword id="KW-0479">Metal-binding</keyword>
<keyword id="KW-1185">Reference proteome</keyword>
<keyword id="KW-0687">Ribonucleoprotein</keyword>
<keyword id="KW-0689">Ribosomal protein</keyword>
<keyword id="KW-0694">RNA-binding</keyword>
<keyword id="KW-0699">rRNA-binding</keyword>
<keyword id="KW-0862">Zinc</keyword>
<comment type="function">
    <text evidence="1">Binds 16S rRNA, required for the assembly of 30S particles and may also be responsible for determining the conformation of the 16S rRNA at the A site.</text>
</comment>
<comment type="cofactor">
    <cofactor evidence="1">
        <name>Zn(2+)</name>
        <dbReference type="ChEBI" id="CHEBI:29105"/>
    </cofactor>
    <text evidence="1">Binds 1 zinc ion per subunit.</text>
</comment>
<comment type="subunit">
    <text evidence="1">Part of the 30S ribosomal subunit. Contacts proteins S3 and S10.</text>
</comment>
<comment type="similarity">
    <text evidence="1">Belongs to the universal ribosomal protein uS14 family. Zinc-binding uS14 subfamily.</text>
</comment>
<feature type="chain" id="PRO_1000067919" description="Small ribosomal subunit protein uS14">
    <location>
        <begin position="1"/>
        <end position="61"/>
    </location>
</feature>
<feature type="binding site" evidence="1">
    <location>
        <position position="24"/>
    </location>
    <ligand>
        <name>Zn(2+)</name>
        <dbReference type="ChEBI" id="CHEBI:29105"/>
    </ligand>
</feature>
<feature type="binding site" evidence="1">
    <location>
        <position position="27"/>
    </location>
    <ligand>
        <name>Zn(2+)</name>
        <dbReference type="ChEBI" id="CHEBI:29105"/>
    </ligand>
</feature>
<feature type="binding site" evidence="1">
    <location>
        <position position="40"/>
    </location>
    <ligand>
        <name>Zn(2+)</name>
        <dbReference type="ChEBI" id="CHEBI:29105"/>
    </ligand>
</feature>
<feature type="binding site" evidence="1">
    <location>
        <position position="43"/>
    </location>
    <ligand>
        <name>Zn(2+)</name>
        <dbReference type="ChEBI" id="CHEBI:29105"/>
    </ligand>
</feature>
<organism>
    <name type="scientific">Acidothermus cellulolyticus (strain ATCC 43068 / DSM 8971 / 11B)</name>
    <dbReference type="NCBI Taxonomy" id="351607"/>
    <lineage>
        <taxon>Bacteria</taxon>
        <taxon>Bacillati</taxon>
        <taxon>Actinomycetota</taxon>
        <taxon>Actinomycetes</taxon>
        <taxon>Acidothermales</taxon>
        <taxon>Acidothermaceae</taxon>
        <taxon>Acidothermus</taxon>
    </lineage>
</organism>
<reference key="1">
    <citation type="journal article" date="2009" name="Genome Res.">
        <title>Complete genome of the cellulolytic thermophile Acidothermus cellulolyticus 11B provides insights into its ecophysiological and evolutionary adaptations.</title>
        <authorList>
            <person name="Barabote R.D."/>
            <person name="Xie G."/>
            <person name="Leu D.H."/>
            <person name="Normand P."/>
            <person name="Necsulea A."/>
            <person name="Daubin V."/>
            <person name="Medigue C."/>
            <person name="Adney W.S."/>
            <person name="Xu X.C."/>
            <person name="Lapidus A."/>
            <person name="Parales R.E."/>
            <person name="Detter C."/>
            <person name="Pujic P."/>
            <person name="Bruce D."/>
            <person name="Lavire C."/>
            <person name="Challacombe J.F."/>
            <person name="Brettin T.S."/>
            <person name="Berry A.M."/>
        </authorList>
    </citation>
    <scope>NUCLEOTIDE SEQUENCE [LARGE SCALE GENOMIC DNA]</scope>
    <source>
        <strain>ATCC 43068 / DSM 8971 / 11B</strain>
    </source>
</reference>
<protein>
    <recommendedName>
        <fullName evidence="1">Small ribosomal subunit protein uS14</fullName>
    </recommendedName>
    <alternativeName>
        <fullName evidence="2">30S ribosomal protein S14 type Z</fullName>
    </alternativeName>
</protein>
<dbReference type="EMBL" id="CP000481">
    <property type="protein sequence ID" value="ABK52093.1"/>
    <property type="molecule type" value="Genomic_DNA"/>
</dbReference>
<dbReference type="RefSeq" id="WP_011719156.1">
    <property type="nucleotide sequence ID" value="NC_008578.1"/>
</dbReference>
<dbReference type="SMR" id="A0LRN3"/>
<dbReference type="FunCoup" id="A0LRN3">
    <property type="interactions" value="73"/>
</dbReference>
<dbReference type="STRING" id="351607.Acel_0319"/>
<dbReference type="KEGG" id="ace:Acel_0319"/>
<dbReference type="eggNOG" id="COG0199">
    <property type="taxonomic scope" value="Bacteria"/>
</dbReference>
<dbReference type="HOGENOM" id="CLU_139869_3_0_11"/>
<dbReference type="InParanoid" id="A0LRN3"/>
<dbReference type="OrthoDB" id="9810484at2"/>
<dbReference type="Proteomes" id="UP000008221">
    <property type="component" value="Chromosome"/>
</dbReference>
<dbReference type="GO" id="GO:0005737">
    <property type="term" value="C:cytoplasm"/>
    <property type="evidence" value="ECO:0007669"/>
    <property type="project" value="UniProtKB-ARBA"/>
</dbReference>
<dbReference type="GO" id="GO:0015935">
    <property type="term" value="C:small ribosomal subunit"/>
    <property type="evidence" value="ECO:0007669"/>
    <property type="project" value="TreeGrafter"/>
</dbReference>
<dbReference type="GO" id="GO:0019843">
    <property type="term" value="F:rRNA binding"/>
    <property type="evidence" value="ECO:0007669"/>
    <property type="project" value="UniProtKB-UniRule"/>
</dbReference>
<dbReference type="GO" id="GO:0003735">
    <property type="term" value="F:structural constituent of ribosome"/>
    <property type="evidence" value="ECO:0007669"/>
    <property type="project" value="InterPro"/>
</dbReference>
<dbReference type="GO" id="GO:0008270">
    <property type="term" value="F:zinc ion binding"/>
    <property type="evidence" value="ECO:0007669"/>
    <property type="project" value="UniProtKB-UniRule"/>
</dbReference>
<dbReference type="GO" id="GO:0006412">
    <property type="term" value="P:translation"/>
    <property type="evidence" value="ECO:0007669"/>
    <property type="project" value="UniProtKB-UniRule"/>
</dbReference>
<dbReference type="FunFam" id="4.10.830.10:FF:000001">
    <property type="entry name" value="30S ribosomal protein S14 type Z"/>
    <property type="match status" value="1"/>
</dbReference>
<dbReference type="Gene3D" id="4.10.830.10">
    <property type="entry name" value="30s Ribosomal Protein S14, Chain N"/>
    <property type="match status" value="1"/>
</dbReference>
<dbReference type="HAMAP" id="MF_01364_B">
    <property type="entry name" value="Ribosomal_uS14_2_B"/>
    <property type="match status" value="1"/>
</dbReference>
<dbReference type="InterPro" id="IPR001209">
    <property type="entry name" value="Ribosomal_uS14"/>
</dbReference>
<dbReference type="InterPro" id="IPR023053">
    <property type="entry name" value="Ribosomal_uS14_bact"/>
</dbReference>
<dbReference type="InterPro" id="IPR018271">
    <property type="entry name" value="Ribosomal_uS14_CS"/>
</dbReference>
<dbReference type="InterPro" id="IPR043140">
    <property type="entry name" value="Ribosomal_uS14_sf"/>
</dbReference>
<dbReference type="NCBIfam" id="NF005974">
    <property type="entry name" value="PRK08061.1"/>
    <property type="match status" value="1"/>
</dbReference>
<dbReference type="PANTHER" id="PTHR19836">
    <property type="entry name" value="30S RIBOSOMAL PROTEIN S14"/>
    <property type="match status" value="1"/>
</dbReference>
<dbReference type="PANTHER" id="PTHR19836:SF19">
    <property type="entry name" value="SMALL RIBOSOMAL SUBUNIT PROTEIN US14M"/>
    <property type="match status" value="1"/>
</dbReference>
<dbReference type="Pfam" id="PF00253">
    <property type="entry name" value="Ribosomal_S14"/>
    <property type="match status" value="1"/>
</dbReference>
<dbReference type="SUPFAM" id="SSF57716">
    <property type="entry name" value="Glucocorticoid receptor-like (DNA-binding domain)"/>
    <property type="match status" value="1"/>
</dbReference>
<dbReference type="PROSITE" id="PS00527">
    <property type="entry name" value="RIBOSOMAL_S14"/>
    <property type="match status" value="1"/>
</dbReference>
<name>RS14Z_ACIC1</name>
<evidence type="ECO:0000255" key="1">
    <source>
        <dbReference type="HAMAP-Rule" id="MF_01364"/>
    </source>
</evidence>
<evidence type="ECO:0000305" key="2"/>